<name>CHIPS_STAAR</name>
<evidence type="ECO:0000250" key="1"/>
<evidence type="ECO:0000305" key="2"/>
<dbReference type="EMBL" id="BX571856">
    <property type="protein sequence ID" value="CAG41022.1"/>
    <property type="molecule type" value="Genomic_DNA"/>
</dbReference>
<dbReference type="RefSeq" id="WP_000727649.1">
    <property type="nucleotide sequence ID" value="NC_002952.2"/>
</dbReference>
<dbReference type="BMRB" id="Q6GFB3"/>
<dbReference type="SMR" id="Q6GFB3"/>
<dbReference type="KEGG" id="sar:SAR2036"/>
<dbReference type="HOGENOM" id="CLU_1748521_0_0_9"/>
<dbReference type="PRO" id="PR:Q6GFB3"/>
<dbReference type="Proteomes" id="UP000000596">
    <property type="component" value="Chromosome"/>
</dbReference>
<dbReference type="GO" id="GO:0005576">
    <property type="term" value="C:extracellular region"/>
    <property type="evidence" value="ECO:0007669"/>
    <property type="project" value="UniProtKB-SubCell"/>
</dbReference>
<dbReference type="Gene3D" id="3.10.20.390">
    <property type="entry name" value="Chemotaxis-inhibiting protein CHIPS"/>
    <property type="match status" value="1"/>
</dbReference>
<dbReference type="InterPro" id="IPR020986">
    <property type="entry name" value="CHIPS"/>
</dbReference>
<dbReference type="InterPro" id="IPR038529">
    <property type="entry name" value="FLIPR/CHIP_sf"/>
</dbReference>
<dbReference type="InterPro" id="IPR023253">
    <property type="entry name" value="FLIPR/CHIPS"/>
</dbReference>
<dbReference type="NCBIfam" id="NF009591">
    <property type="entry name" value="PRK13032.1"/>
    <property type="match status" value="1"/>
</dbReference>
<dbReference type="Pfam" id="PF11434">
    <property type="entry name" value="CHIPS"/>
    <property type="match status" value="1"/>
</dbReference>
<dbReference type="PRINTS" id="PR02036">
    <property type="entry name" value="CHEMOTAXISIP"/>
</dbReference>
<dbReference type="PRINTS" id="PR02035">
    <property type="entry name" value="FLIPRCHIPS"/>
</dbReference>
<gene>
    <name type="primary">chp</name>
    <name type="ordered locus">SAR2036</name>
</gene>
<proteinExistence type="inferred from homology"/>
<organism>
    <name type="scientific">Staphylococcus aureus (strain MRSA252)</name>
    <dbReference type="NCBI Taxonomy" id="282458"/>
    <lineage>
        <taxon>Bacteria</taxon>
        <taxon>Bacillati</taxon>
        <taxon>Bacillota</taxon>
        <taxon>Bacilli</taxon>
        <taxon>Bacillales</taxon>
        <taxon>Staphylococcaceae</taxon>
        <taxon>Staphylococcus</taxon>
    </lineage>
</organism>
<keyword id="KW-0964">Secreted</keyword>
<keyword id="KW-0732">Signal</keyword>
<keyword id="KW-0843">Virulence</keyword>
<protein>
    <recommendedName>
        <fullName>Chemotaxis inhibitory protein</fullName>
    </recommendedName>
    <alternativeName>
        <fullName>CHIPS</fullName>
    </alternativeName>
</protein>
<sequence length="149" mass="17058">MKKKLATTVLALSFLTAGISTHHHSAKAFTFEPFPTNEEIESNKKMLEKEKAYKESFKNSGLPTTLGKLDERLRNYLKKGTKNSAQFEKMVILTENKGYYTVYLNTPLAEDRKNVELLGKMYKTYFFKKGESKSSYVINGPGKTNEYAY</sequence>
<reference key="1">
    <citation type="journal article" date="2004" name="Proc. Natl. Acad. Sci. U.S.A.">
        <title>Complete genomes of two clinical Staphylococcus aureus strains: evidence for the rapid evolution of virulence and drug resistance.</title>
        <authorList>
            <person name="Holden M.T.G."/>
            <person name="Feil E.J."/>
            <person name="Lindsay J.A."/>
            <person name="Peacock S.J."/>
            <person name="Day N.P.J."/>
            <person name="Enright M.C."/>
            <person name="Foster T.J."/>
            <person name="Moore C.E."/>
            <person name="Hurst L."/>
            <person name="Atkin R."/>
            <person name="Barron A."/>
            <person name="Bason N."/>
            <person name="Bentley S.D."/>
            <person name="Chillingworth C."/>
            <person name="Chillingworth T."/>
            <person name="Churcher C."/>
            <person name="Clark L."/>
            <person name="Corton C."/>
            <person name="Cronin A."/>
            <person name="Doggett J."/>
            <person name="Dowd L."/>
            <person name="Feltwell T."/>
            <person name="Hance Z."/>
            <person name="Harris B."/>
            <person name="Hauser H."/>
            <person name="Holroyd S."/>
            <person name="Jagels K."/>
            <person name="James K.D."/>
            <person name="Lennard N."/>
            <person name="Line A."/>
            <person name="Mayes R."/>
            <person name="Moule S."/>
            <person name="Mungall K."/>
            <person name="Ormond D."/>
            <person name="Quail M.A."/>
            <person name="Rabbinowitsch E."/>
            <person name="Rutherford K.M."/>
            <person name="Sanders M."/>
            <person name="Sharp S."/>
            <person name="Simmonds M."/>
            <person name="Stevens K."/>
            <person name="Whitehead S."/>
            <person name="Barrell B.G."/>
            <person name="Spratt B.G."/>
            <person name="Parkhill J."/>
        </authorList>
    </citation>
    <scope>NUCLEOTIDE SEQUENCE [LARGE SCALE GENOMIC DNA]</scope>
    <source>
        <strain>MRSA252</strain>
    </source>
</reference>
<comment type="function">
    <text evidence="1">Involved in countering the first line of host defense mechanisms. Specifically inhibits the response of human neutrophils and monocytes to complement anaphylatoxin C5a and formylated peptides, like N-formyl-methionyl-leucyl-phenylalanine (fMLP). Acts by binding directly to the C5a receptor (C5aR) and formylated peptide receptor (FPR), thereby blocking the C5a- and fMLP-induced calcium responses. Prevents phagocytosis of the bacterium (By similarity).</text>
</comment>
<comment type="subcellular location">
    <subcellularLocation>
        <location evidence="1">Secreted</location>
    </subcellularLocation>
</comment>
<comment type="similarity">
    <text evidence="2">Belongs to the CHIPS/FLIPr family.</text>
</comment>
<feature type="signal peptide" evidence="1">
    <location>
        <begin position="1"/>
        <end position="28"/>
    </location>
</feature>
<feature type="chain" id="PRO_0000319605" description="Chemotaxis inhibitory protein">
    <location>
        <begin position="29"/>
        <end position="149"/>
    </location>
</feature>
<feature type="region of interest" description="FPR-blocking activity" evidence="1">
    <location>
        <begin position="29"/>
        <end position="34"/>
    </location>
</feature>
<feature type="region of interest" description="C5aR-blocking activity" evidence="1">
    <location>
        <begin position="59"/>
        <end position="149"/>
    </location>
</feature>
<accession>Q6GFB3</accession>